<name>NAI2_ARATH</name>
<feature type="signal peptide" evidence="1">
    <location>
        <begin position="1"/>
        <end position="24"/>
    </location>
</feature>
<feature type="chain" id="PRO_0000430465" description="TSA1-like protein">
    <location>
        <begin position="25"/>
        <end position="772"/>
    </location>
</feature>
<feature type="repeat" description="EFE repeat 1">
    <location>
        <begin position="98"/>
        <end position="138"/>
    </location>
</feature>
<feature type="repeat" description="EFE repeat 2">
    <location>
        <begin position="139"/>
        <end position="176"/>
    </location>
</feature>
<feature type="repeat" description="EFE repeat 3">
    <location>
        <begin position="177"/>
        <end position="213"/>
    </location>
</feature>
<feature type="repeat" description="EFE repeat 4">
    <location>
        <begin position="214"/>
        <end position="251"/>
    </location>
</feature>
<feature type="repeat" description="EFE repeat 5">
    <location>
        <begin position="252"/>
        <end position="292"/>
    </location>
</feature>
<feature type="repeat" description="EFE repeat 6">
    <location>
        <begin position="293"/>
        <end position="330"/>
    </location>
</feature>
<feature type="repeat" description="EFE repeat 7">
    <location>
        <begin position="331"/>
        <end position="368"/>
    </location>
</feature>
<feature type="repeat" description="EFE repeat 8">
    <location>
        <begin position="369"/>
        <end position="407"/>
    </location>
</feature>
<feature type="repeat" description="EFE repeat 9">
    <location>
        <begin position="408"/>
        <end position="439"/>
    </location>
</feature>
<feature type="repeat" description="EFE repeat 10">
    <location>
        <begin position="440"/>
        <end position="472"/>
    </location>
</feature>
<feature type="region of interest" description="Disordered" evidence="2">
    <location>
        <begin position="49"/>
        <end position="72"/>
    </location>
</feature>
<feature type="region of interest" description="10 X approximate EFE repeat">
    <location>
        <begin position="98"/>
        <end position="472"/>
    </location>
</feature>
<feature type="region of interest" description="Disordered" evidence="2">
    <location>
        <begin position="465"/>
        <end position="487"/>
    </location>
</feature>
<feature type="region of interest" description="Disordered" evidence="2">
    <location>
        <begin position="555"/>
        <end position="585"/>
    </location>
</feature>
<feature type="coiled-coil region" evidence="1">
    <location>
        <begin position="187"/>
        <end position="476"/>
    </location>
</feature>
<feature type="coiled-coil region" evidence="1">
    <location>
        <begin position="688"/>
        <end position="748"/>
    </location>
</feature>
<feature type="compositionally biased region" description="Polar residues" evidence="2">
    <location>
        <begin position="466"/>
        <end position="487"/>
    </location>
</feature>
<feature type="compositionally biased region" description="Low complexity" evidence="2">
    <location>
        <begin position="561"/>
        <end position="585"/>
    </location>
</feature>
<feature type="splice variant" id="VSP_056758" description="In isoform 2." evidence="7">
    <location>
        <begin position="184"/>
        <end position="221"/>
    </location>
</feature>
<feature type="sequence conflict" description="In Ref. 4; CAC81061." evidence="7" ref="4">
    <original>S</original>
    <variation>P</variation>
    <location>
        <position position="523"/>
    </location>
</feature>
<accession>Q9LSB4</accession>
<accession>F4J1D7</accession>
<accession>Q712H0</accession>
<sequence>MGTKFLALGLSLCLVLSSFYQVSCQDEGTGSLSTLDLIEHEYQTSVNSLQGNEAVDQTETSGQKNSTVSDNNTISLSLSEEPALETLKESVDTSAELGAVTDEVDKPSSMLDHIELEFEAHINELKEAGSDGINKVEESKDDEEAARRHKMLEAIEREFEAAHAGFEQLKTDDSAQGLDDEQSAKRQSMLDEIERDFEAATKGLEQLKADDLTGINDEEHAAKRQKMLEEIEREFEEATKGLEELRHSTSSTDDEAQSAKRQNMLDEIEREFEAATSGLKELKINAHTVKDDVDDKEQDAKRQSMLDAIEREFEAVTESFKQLEDIADNKAEGDDESAKRQSMLDEIEREFEAATNSLKQLNLDDFSEGDDSAESARRNSMLEAIEREFEAATKGLEELKANDSTGDKDDDEHVARRKIMLEAIEREFEAATKGLEELKNESEQAENKRNSMLEAFEREFEAATNAKANGENSAKNPSTISTTVQKSSGGYNAGLEGLLKPADGVCGCFNKDKDGLQADTDSSINIAEILAEESKLQGSGTSRLTTSLNNLVDTHRKETSSKVGSVLGSSSSVTSTTSESAATSESIESLKQTLRKLRGLSARDLVNHPNFDAIIAAGTRYEVLSSASIGYISLLAKYKTVIKEGLEASQRVQIAQTRAKLLKETAMEKQRTVDSVFAAAKTTAQRGDALHIRIVAIKKLLAKLEAEKVDVDSKFTSLTTSLSELLKEASQAYEEYHEAVHKAKDEQAAEEFAVETTKRAEHIWVEFLSSLN</sequence>
<evidence type="ECO:0000255" key="1"/>
<evidence type="ECO:0000256" key="2">
    <source>
        <dbReference type="SAM" id="MobiDB-lite"/>
    </source>
</evidence>
<evidence type="ECO:0000269" key="3">
    <source>
    </source>
</evidence>
<evidence type="ECO:0000269" key="4">
    <source>
    </source>
</evidence>
<evidence type="ECO:0000269" key="5">
    <source>
    </source>
</evidence>
<evidence type="ECO:0000269" key="6">
    <source>
    </source>
</evidence>
<evidence type="ECO:0000305" key="7"/>
<evidence type="ECO:0000305" key="8">
    <source>
    </source>
</evidence>
<organism>
    <name type="scientific">Arabidopsis thaliana</name>
    <name type="common">Mouse-ear cress</name>
    <dbReference type="NCBI Taxonomy" id="3702"/>
    <lineage>
        <taxon>Eukaryota</taxon>
        <taxon>Viridiplantae</taxon>
        <taxon>Streptophyta</taxon>
        <taxon>Embryophyta</taxon>
        <taxon>Tracheophyta</taxon>
        <taxon>Spermatophyta</taxon>
        <taxon>Magnoliopsida</taxon>
        <taxon>eudicotyledons</taxon>
        <taxon>Gunneridae</taxon>
        <taxon>Pentapetalae</taxon>
        <taxon>rosids</taxon>
        <taxon>malvids</taxon>
        <taxon>Brassicales</taxon>
        <taxon>Brassicaceae</taxon>
        <taxon>Camelineae</taxon>
        <taxon>Arabidopsis</taxon>
    </lineage>
</organism>
<gene>
    <name type="primary">NAI2</name>
    <name type="ordered locus">At3g15950</name>
    <name type="ORF">MVC8.9</name>
</gene>
<reference key="1">
    <citation type="journal article" date="2000" name="DNA Res.">
        <title>Structural analysis of Arabidopsis thaliana chromosome 3. I. Sequence features of the regions of 4,504,864 bp covered by sixty P1 and TAC clones.</title>
        <authorList>
            <person name="Sato S."/>
            <person name="Nakamura Y."/>
            <person name="Kaneko T."/>
            <person name="Katoh T."/>
            <person name="Asamizu E."/>
            <person name="Tabata S."/>
        </authorList>
    </citation>
    <scope>NUCLEOTIDE SEQUENCE [LARGE SCALE GENOMIC DNA]</scope>
    <source>
        <strain>cv. Columbia</strain>
    </source>
</reference>
<reference key="2">
    <citation type="journal article" date="2017" name="Plant J.">
        <title>Araport11: a complete reannotation of the Arabidopsis thaliana reference genome.</title>
        <authorList>
            <person name="Cheng C.Y."/>
            <person name="Krishnakumar V."/>
            <person name="Chan A.P."/>
            <person name="Thibaud-Nissen F."/>
            <person name="Schobel S."/>
            <person name="Town C.D."/>
        </authorList>
    </citation>
    <scope>GENOME REANNOTATION</scope>
    <source>
        <strain>cv. Columbia</strain>
    </source>
</reference>
<reference key="3">
    <citation type="journal article" date="2003" name="Science">
        <title>Empirical analysis of transcriptional activity in the Arabidopsis genome.</title>
        <authorList>
            <person name="Yamada K."/>
            <person name="Lim J."/>
            <person name="Dale J.M."/>
            <person name="Chen H."/>
            <person name="Shinn P."/>
            <person name="Palm C.J."/>
            <person name="Southwick A.M."/>
            <person name="Wu H.C."/>
            <person name="Kim C.J."/>
            <person name="Nguyen M."/>
            <person name="Pham P.K."/>
            <person name="Cheuk R.F."/>
            <person name="Karlin-Newmann G."/>
            <person name="Liu S.X."/>
            <person name="Lam B."/>
            <person name="Sakano H."/>
            <person name="Wu T."/>
            <person name="Yu G."/>
            <person name="Miranda M."/>
            <person name="Quach H.L."/>
            <person name="Tripp M."/>
            <person name="Chang C.H."/>
            <person name="Lee J.M."/>
            <person name="Toriumi M.J."/>
            <person name="Chan M.M."/>
            <person name="Tang C.C."/>
            <person name="Onodera C.S."/>
            <person name="Deng J.M."/>
            <person name="Akiyama K."/>
            <person name="Ansari Y."/>
            <person name="Arakawa T."/>
            <person name="Banh J."/>
            <person name="Banno F."/>
            <person name="Bowser L."/>
            <person name="Brooks S.Y."/>
            <person name="Carninci P."/>
            <person name="Chao Q."/>
            <person name="Choy N."/>
            <person name="Enju A."/>
            <person name="Goldsmith A.D."/>
            <person name="Gurjal M."/>
            <person name="Hansen N.F."/>
            <person name="Hayashizaki Y."/>
            <person name="Johnson-Hopson C."/>
            <person name="Hsuan V.W."/>
            <person name="Iida K."/>
            <person name="Karnes M."/>
            <person name="Khan S."/>
            <person name="Koesema E."/>
            <person name="Ishida J."/>
            <person name="Jiang P.X."/>
            <person name="Jones T."/>
            <person name="Kawai J."/>
            <person name="Kamiya A."/>
            <person name="Meyers C."/>
            <person name="Nakajima M."/>
            <person name="Narusaka M."/>
            <person name="Seki M."/>
            <person name="Sakurai T."/>
            <person name="Satou M."/>
            <person name="Tamse R."/>
            <person name="Vaysberg M."/>
            <person name="Wallender E.K."/>
            <person name="Wong C."/>
            <person name="Yamamura Y."/>
            <person name="Yuan S."/>
            <person name="Shinozaki K."/>
            <person name="Davis R.W."/>
            <person name="Theologis A."/>
            <person name="Ecker J.R."/>
        </authorList>
    </citation>
    <scope>NUCLEOTIDE SEQUENCE [LARGE SCALE MRNA] (ISOFORM 1)</scope>
    <source>
        <strain>cv. Columbia</strain>
    </source>
</reference>
<reference key="4">
    <citation type="thesis" date="2000" institute="Cambridge University" country="United Kingdom">
        <authorList>
            <person name="Mahon P."/>
        </authorList>
    </citation>
    <scope>NUCLEOTIDE SEQUENCE [MRNA] OF 286-772</scope>
</reference>
<reference key="5">
    <citation type="journal article" date="2005" name="Plant Cell Physiol.">
        <title>An Arabidopsis protein with a novel calcium-binding repeat sequence interacts with TONSOKU/MGOUN3/BRUSHY1 involved in meristem maintenance.</title>
        <authorList>
            <person name="Suzuki T."/>
            <person name="Nakajima S."/>
            <person name="Morikami A."/>
            <person name="Nakamura K."/>
        </authorList>
    </citation>
    <scope>TISSUE SPECIFICITY</scope>
</reference>
<reference key="6">
    <citation type="journal article" date="2007" name="Plant Cell">
        <title>Proteome analysis of Arabidopsis leaf peroxisomes reveals novel targeting peptides, metabolic pathways, and defense mechanisms.</title>
        <authorList>
            <person name="Reumann S."/>
            <person name="Babujee L."/>
            <person name="Ma C."/>
            <person name="Wienkoop S."/>
            <person name="Siemsen T."/>
            <person name="Antonicelli G.E."/>
            <person name="Rasche N."/>
            <person name="Lueder F."/>
            <person name="Weckwerth W."/>
            <person name="Jahn O."/>
        </authorList>
    </citation>
    <scope>IDENTIFICATION BY MASS SPECTROMETRY</scope>
</reference>
<reference key="7">
    <citation type="journal article" date="2008" name="Plant Cell">
        <title>NAI2 is an endoplasmic reticulum body component that enables ER body formation in Arabidopsis thaliana.</title>
        <authorList>
            <person name="Yamada K."/>
            <person name="Nagano A.J."/>
            <person name="Nishina M."/>
            <person name="Hara-Nishimura I."/>
            <person name="Nishimura M."/>
        </authorList>
    </citation>
    <scope>FUNCTION</scope>
    <scope>DISRUPTION PHENOTYPE</scope>
    <scope>SUBCELLULAR LOCATION</scope>
    <scope>INDUCTION</scope>
    <scope>LACK OF INTERACTION WITH PYK10</scope>
    <scope>DOMAIN</scope>
    <source>
        <strain>cv. Columbia</strain>
    </source>
</reference>
<reference key="8">
    <citation type="journal article" date="2009" name="Plant Signal. Behav.">
        <title>The ER body, a new organelle in Arabidopsis thaliana, requires NAI2 for its formation and accumulates specific beta-glucosidases.</title>
        <authorList>
            <person name="Yamada K."/>
            <person name="Nagano A.J."/>
            <person name="Ogasawara K."/>
            <person name="Hara-Nishimura I."/>
            <person name="Nishimura M."/>
        </authorList>
    </citation>
    <scope>FUNCTION</scope>
</reference>
<reference key="9">
    <citation type="journal article" date="2013" name="Plant Physiol.">
        <title>Identification of two novel endoplasmic reticulum body-specific integral membrane proteins.</title>
        <authorList>
            <person name="Yamada K."/>
            <person name="Nagano A.J."/>
            <person name="Nishina M."/>
            <person name="Hara-Nishimura I."/>
            <person name="Nishimura M."/>
        </authorList>
    </citation>
    <scope>FUNCTION</scope>
    <scope>INTERACTION WITH MEB1 AND MEB2</scope>
</reference>
<dbReference type="EMBL" id="AB026653">
    <property type="protein sequence ID" value="BAB02881.1"/>
    <property type="molecule type" value="Genomic_DNA"/>
</dbReference>
<dbReference type="EMBL" id="CP002686">
    <property type="protein sequence ID" value="AEE75751.1"/>
    <property type="molecule type" value="Genomic_DNA"/>
</dbReference>
<dbReference type="EMBL" id="CP002686">
    <property type="protein sequence ID" value="AEE75752.1"/>
    <property type="molecule type" value="Genomic_DNA"/>
</dbReference>
<dbReference type="EMBL" id="AY120750">
    <property type="protein sequence ID" value="AAM53308.1"/>
    <property type="molecule type" value="mRNA"/>
</dbReference>
<dbReference type="EMBL" id="BT001207">
    <property type="protein sequence ID" value="AAN65094.1"/>
    <property type="molecule type" value="mRNA"/>
</dbReference>
<dbReference type="EMBL" id="AJ271471">
    <property type="protein sequence ID" value="CAC81061.1"/>
    <property type="molecule type" value="mRNA"/>
</dbReference>
<dbReference type="RefSeq" id="NP_001030708.1">
    <molecule id="Q9LSB4-2"/>
    <property type="nucleotide sequence ID" value="NM_001035631.2"/>
</dbReference>
<dbReference type="RefSeq" id="NP_188216.2">
    <molecule id="Q9LSB4-1"/>
    <property type="nucleotide sequence ID" value="NM_112465.4"/>
</dbReference>
<dbReference type="SMR" id="Q9LSB4"/>
<dbReference type="BioGRID" id="6173">
    <property type="interactions" value="6"/>
</dbReference>
<dbReference type="FunCoup" id="Q9LSB4">
    <property type="interactions" value="33"/>
</dbReference>
<dbReference type="STRING" id="3702.Q9LSB4"/>
<dbReference type="MetOSite" id="Q9LSB4"/>
<dbReference type="SwissPalm" id="Q9LSB4"/>
<dbReference type="PaxDb" id="3702-AT3G15950.1"/>
<dbReference type="ProteomicsDB" id="251272">
    <molecule id="Q9LSB4-1"/>
</dbReference>
<dbReference type="EnsemblPlants" id="AT3G15950.1">
    <molecule id="Q9LSB4-1"/>
    <property type="protein sequence ID" value="AT3G15950.1"/>
    <property type="gene ID" value="AT3G15950"/>
</dbReference>
<dbReference type="EnsemblPlants" id="AT3G15950.2">
    <molecule id="Q9LSB4-2"/>
    <property type="protein sequence ID" value="AT3G15950.2"/>
    <property type="gene ID" value="AT3G15950"/>
</dbReference>
<dbReference type="GeneID" id="820839"/>
<dbReference type="Gramene" id="AT3G15950.1">
    <molecule id="Q9LSB4-1"/>
    <property type="protein sequence ID" value="AT3G15950.1"/>
    <property type="gene ID" value="AT3G15950"/>
</dbReference>
<dbReference type="Gramene" id="AT3G15950.2">
    <molecule id="Q9LSB4-2"/>
    <property type="protein sequence ID" value="AT3G15950.2"/>
    <property type="gene ID" value="AT3G15950"/>
</dbReference>
<dbReference type="KEGG" id="ath:AT3G15950"/>
<dbReference type="Araport" id="AT3G15950"/>
<dbReference type="TAIR" id="AT3G15950">
    <property type="gene designation" value="NAI2"/>
</dbReference>
<dbReference type="HOGENOM" id="CLU_021185_0_0_1"/>
<dbReference type="InParanoid" id="Q9LSB4"/>
<dbReference type="OMA" id="HAYEEYH"/>
<dbReference type="PhylomeDB" id="Q9LSB4"/>
<dbReference type="PRO" id="PR:Q9LSB4"/>
<dbReference type="Proteomes" id="UP000006548">
    <property type="component" value="Chromosome 3"/>
</dbReference>
<dbReference type="ExpressionAtlas" id="Q9LSB4">
    <property type="expression patterns" value="baseline and differential"/>
</dbReference>
<dbReference type="GO" id="GO:0005788">
    <property type="term" value="C:endoplasmic reticulum lumen"/>
    <property type="evidence" value="ECO:0007669"/>
    <property type="project" value="UniProtKB-SubCell"/>
</dbReference>
<dbReference type="GO" id="GO:0010168">
    <property type="term" value="C:ER body"/>
    <property type="evidence" value="ECO:0000314"/>
    <property type="project" value="TAIR"/>
</dbReference>
<dbReference type="GO" id="GO:0005777">
    <property type="term" value="C:peroxisome"/>
    <property type="evidence" value="ECO:0007005"/>
    <property type="project" value="TAIR"/>
</dbReference>
<dbReference type="GO" id="GO:0009506">
    <property type="term" value="C:plasmodesma"/>
    <property type="evidence" value="ECO:0007005"/>
    <property type="project" value="TAIR"/>
</dbReference>
<dbReference type="GO" id="GO:0099503">
    <property type="term" value="C:secretory vesicle"/>
    <property type="evidence" value="ECO:0007005"/>
    <property type="project" value="TAIR"/>
</dbReference>
<dbReference type="GO" id="GO:0080119">
    <property type="term" value="P:ER body organization"/>
    <property type="evidence" value="ECO:0000315"/>
    <property type="project" value="TAIR"/>
</dbReference>
<comment type="function">
    <text evidence="4 5 6">Responsible for the ER body formation. Regulates the number and shape of the ER bodies and the accumulation of PYK10 in ER bodies, but is not involved in the expression of PYK10.</text>
</comment>
<comment type="subunit">
    <text evidence="6">Has no interaction with PYK10 and is not part of the PYK10 complex. Interacts directly or indirectly with MEB1 and MEB2.</text>
</comment>
<comment type="subcellular location">
    <subcellularLocation>
        <location evidence="4">Endoplasmic reticulum lumen</location>
    </subcellularLocation>
    <text>Located in ER bodies.</text>
</comment>
<comment type="alternative products">
    <event type="alternative splicing"/>
    <isoform>
        <id>Q9LSB4-1</id>
        <name>1</name>
        <sequence type="displayed"/>
    </isoform>
    <isoform>
        <id>Q9LSB4-2</id>
        <name>2</name>
        <sequence type="described" ref="VSP_056758"/>
    </isoform>
</comment>
<comment type="tissue specificity">
    <text evidence="3">Expressed in roots. Detected in shoot apex.</text>
</comment>
<comment type="induction">
    <text evidence="4">Induced by NAI1.</text>
</comment>
<comment type="domain">
    <text evidence="4">Contains a N-terminal NAI2 domain (472-772).</text>
</comment>
<comment type="disruption phenotype">
    <text evidence="4">Loss of ER bodies accumulation in all parts of the seedling and alteration of PYK10 localization.</text>
</comment>
<comment type="miscellaneous">
    <text evidence="8">'Nai' means 'nothing' in Japanese. Homologous proteins are found only in Brassicales plants (PubMed:18780803).</text>
</comment>
<keyword id="KW-0025">Alternative splicing</keyword>
<keyword id="KW-0175">Coiled coil</keyword>
<keyword id="KW-0256">Endoplasmic reticulum</keyword>
<keyword id="KW-1185">Reference proteome</keyword>
<keyword id="KW-0677">Repeat</keyword>
<keyword id="KW-0732">Signal</keyword>
<proteinExistence type="evidence at protein level"/>
<protein>
    <recommendedName>
        <fullName>TSA1-like protein</fullName>
    </recommendedName>
    <alternativeName>
        <fullName>Protein NAI2</fullName>
    </alternativeName>
</protein>